<feature type="chain" id="PRO_0000049838" description="Uncharacterized protein YqjZ">
    <location>
        <begin position="1"/>
        <end position="114"/>
    </location>
</feature>
<feature type="domain" description="ABM">
    <location>
        <begin position="13"/>
        <end position="99"/>
    </location>
</feature>
<feature type="strand" evidence="1">
    <location>
        <begin position="13"/>
        <end position="21"/>
    </location>
</feature>
<feature type="helix" evidence="1">
    <location>
        <begin position="31"/>
        <end position="42"/>
    </location>
</feature>
<feature type="strand" evidence="1">
    <location>
        <begin position="46"/>
        <end position="53"/>
    </location>
</feature>
<feature type="strand" evidence="1">
    <location>
        <begin position="57"/>
        <end position="66"/>
    </location>
</feature>
<feature type="helix" evidence="1">
    <location>
        <begin position="68"/>
        <end position="77"/>
    </location>
</feature>
<feature type="strand" evidence="1">
    <location>
        <begin position="94"/>
        <end position="102"/>
    </location>
</feature>
<evidence type="ECO:0007829" key="1">
    <source>
        <dbReference type="PDB" id="2GO8"/>
    </source>
</evidence>
<keyword id="KW-0002">3D-structure</keyword>
<keyword id="KW-1185">Reference proteome</keyword>
<reference key="1">
    <citation type="journal article" date="1996" name="Microbiology">
        <title>Systematic sequencing of the 283 kb 210 degrees-232 degrees region of the Bacillus subtilis genome containing the skin element and many sporulation genes.</title>
        <authorList>
            <person name="Mizuno M."/>
            <person name="Masuda S."/>
            <person name="Takemaru K."/>
            <person name="Hosono S."/>
            <person name="Sato T."/>
            <person name="Takeuchi M."/>
            <person name="Kobayashi Y."/>
        </authorList>
    </citation>
    <scope>NUCLEOTIDE SEQUENCE [GENOMIC DNA]</scope>
    <source>
        <strain>168 / JH642</strain>
    </source>
</reference>
<reference key="2">
    <citation type="journal article" date="1997" name="Nature">
        <title>The complete genome sequence of the Gram-positive bacterium Bacillus subtilis.</title>
        <authorList>
            <person name="Kunst F."/>
            <person name="Ogasawara N."/>
            <person name="Moszer I."/>
            <person name="Albertini A.M."/>
            <person name="Alloni G."/>
            <person name="Azevedo V."/>
            <person name="Bertero M.G."/>
            <person name="Bessieres P."/>
            <person name="Bolotin A."/>
            <person name="Borchert S."/>
            <person name="Borriss R."/>
            <person name="Boursier L."/>
            <person name="Brans A."/>
            <person name="Braun M."/>
            <person name="Brignell S.C."/>
            <person name="Bron S."/>
            <person name="Brouillet S."/>
            <person name="Bruschi C.V."/>
            <person name="Caldwell B."/>
            <person name="Capuano V."/>
            <person name="Carter N.M."/>
            <person name="Choi S.-K."/>
            <person name="Codani J.-J."/>
            <person name="Connerton I.F."/>
            <person name="Cummings N.J."/>
            <person name="Daniel R.A."/>
            <person name="Denizot F."/>
            <person name="Devine K.M."/>
            <person name="Duesterhoeft A."/>
            <person name="Ehrlich S.D."/>
            <person name="Emmerson P.T."/>
            <person name="Entian K.-D."/>
            <person name="Errington J."/>
            <person name="Fabret C."/>
            <person name="Ferrari E."/>
            <person name="Foulger D."/>
            <person name="Fritz C."/>
            <person name="Fujita M."/>
            <person name="Fujita Y."/>
            <person name="Fuma S."/>
            <person name="Galizzi A."/>
            <person name="Galleron N."/>
            <person name="Ghim S.-Y."/>
            <person name="Glaser P."/>
            <person name="Goffeau A."/>
            <person name="Golightly E.J."/>
            <person name="Grandi G."/>
            <person name="Guiseppi G."/>
            <person name="Guy B.J."/>
            <person name="Haga K."/>
            <person name="Haiech J."/>
            <person name="Harwood C.R."/>
            <person name="Henaut A."/>
            <person name="Hilbert H."/>
            <person name="Holsappel S."/>
            <person name="Hosono S."/>
            <person name="Hullo M.-F."/>
            <person name="Itaya M."/>
            <person name="Jones L.-M."/>
            <person name="Joris B."/>
            <person name="Karamata D."/>
            <person name="Kasahara Y."/>
            <person name="Klaerr-Blanchard M."/>
            <person name="Klein C."/>
            <person name="Kobayashi Y."/>
            <person name="Koetter P."/>
            <person name="Koningstein G."/>
            <person name="Krogh S."/>
            <person name="Kumano M."/>
            <person name="Kurita K."/>
            <person name="Lapidus A."/>
            <person name="Lardinois S."/>
            <person name="Lauber J."/>
            <person name="Lazarevic V."/>
            <person name="Lee S.-M."/>
            <person name="Levine A."/>
            <person name="Liu H."/>
            <person name="Masuda S."/>
            <person name="Mauel C."/>
            <person name="Medigue C."/>
            <person name="Medina N."/>
            <person name="Mellado R.P."/>
            <person name="Mizuno M."/>
            <person name="Moestl D."/>
            <person name="Nakai S."/>
            <person name="Noback M."/>
            <person name="Noone D."/>
            <person name="O'Reilly M."/>
            <person name="Ogawa K."/>
            <person name="Ogiwara A."/>
            <person name="Oudega B."/>
            <person name="Park S.-H."/>
            <person name="Parro V."/>
            <person name="Pohl T.M."/>
            <person name="Portetelle D."/>
            <person name="Porwollik S."/>
            <person name="Prescott A.M."/>
            <person name="Presecan E."/>
            <person name="Pujic P."/>
            <person name="Purnelle B."/>
            <person name="Rapoport G."/>
            <person name="Rey M."/>
            <person name="Reynolds S."/>
            <person name="Rieger M."/>
            <person name="Rivolta C."/>
            <person name="Rocha E."/>
            <person name="Roche B."/>
            <person name="Rose M."/>
            <person name="Sadaie Y."/>
            <person name="Sato T."/>
            <person name="Scanlan E."/>
            <person name="Schleich S."/>
            <person name="Schroeter R."/>
            <person name="Scoffone F."/>
            <person name="Sekiguchi J."/>
            <person name="Sekowska A."/>
            <person name="Seror S.J."/>
            <person name="Serror P."/>
            <person name="Shin B.-S."/>
            <person name="Soldo B."/>
            <person name="Sorokin A."/>
            <person name="Tacconi E."/>
            <person name="Takagi T."/>
            <person name="Takahashi H."/>
            <person name="Takemaru K."/>
            <person name="Takeuchi M."/>
            <person name="Tamakoshi A."/>
            <person name="Tanaka T."/>
            <person name="Terpstra P."/>
            <person name="Tognoni A."/>
            <person name="Tosato V."/>
            <person name="Uchiyama S."/>
            <person name="Vandenbol M."/>
            <person name="Vannier F."/>
            <person name="Vassarotti A."/>
            <person name="Viari A."/>
            <person name="Wambutt R."/>
            <person name="Wedler E."/>
            <person name="Wedler H."/>
            <person name="Weitzenegger T."/>
            <person name="Winters P."/>
            <person name="Wipat A."/>
            <person name="Yamamoto H."/>
            <person name="Yamane K."/>
            <person name="Yasumoto K."/>
            <person name="Yata K."/>
            <person name="Yoshida K."/>
            <person name="Yoshikawa H.-F."/>
            <person name="Zumstein E."/>
            <person name="Yoshikawa H."/>
            <person name="Danchin A."/>
        </authorList>
    </citation>
    <scope>NUCLEOTIDE SEQUENCE [LARGE SCALE GENOMIC DNA]</scope>
    <source>
        <strain>168</strain>
    </source>
</reference>
<reference key="3">
    <citation type="submission" date="2006-04" db="PDB data bank">
        <title>Crystal structure of YQJZ_BACSU from Bacillus subtilis. Northeast structural genomics target SR435.</title>
        <authorList>
            <consortium name="Northeast structural genomics consortium (NESG)"/>
        </authorList>
    </citation>
    <scope>X-RAY CRYSTALLOGRAPHY (2.3 ANGSTROMS)</scope>
</reference>
<sequence length="114" mass="13048">MMDFLSKTPEPPYYAVIFSSVKSENDTGYGETAERMVSLAADQPGFLGVESVREADGRGITVSYWDSMDAINHWRHHTEHQAAKEKGRSVWYESYAVRVAKVDRQRLFQENTND</sequence>
<organism>
    <name type="scientific">Bacillus subtilis (strain 168)</name>
    <dbReference type="NCBI Taxonomy" id="224308"/>
    <lineage>
        <taxon>Bacteria</taxon>
        <taxon>Bacillati</taxon>
        <taxon>Bacillota</taxon>
        <taxon>Bacilli</taxon>
        <taxon>Bacillales</taxon>
        <taxon>Bacillaceae</taxon>
        <taxon>Bacillus</taxon>
    </lineage>
</organism>
<name>YQJZ_BACSU</name>
<accession>P54563</accession>
<dbReference type="EMBL" id="D84432">
    <property type="protein sequence ID" value="BAA12632.1"/>
    <property type="molecule type" value="Genomic_DNA"/>
</dbReference>
<dbReference type="EMBL" id="AL009126">
    <property type="protein sequence ID" value="CAB14300.1"/>
    <property type="molecule type" value="Genomic_DNA"/>
</dbReference>
<dbReference type="PIR" id="B69966">
    <property type="entry name" value="B69966"/>
</dbReference>
<dbReference type="RefSeq" id="NP_390249.1">
    <property type="nucleotide sequence ID" value="NC_000964.3"/>
</dbReference>
<dbReference type="RefSeq" id="WP_003245961.1">
    <property type="nucleotide sequence ID" value="NZ_OZ025638.1"/>
</dbReference>
<dbReference type="PDB" id="2GO8">
    <property type="method" value="X-ray"/>
    <property type="resolution" value="2.30 A"/>
    <property type="chains" value="A=1-114"/>
</dbReference>
<dbReference type="PDBsum" id="2GO8"/>
<dbReference type="SMR" id="P54563"/>
<dbReference type="FunCoup" id="P54563">
    <property type="interactions" value="36"/>
</dbReference>
<dbReference type="STRING" id="224308.BSU23680"/>
<dbReference type="PaxDb" id="224308-BSU23680"/>
<dbReference type="EnsemblBacteria" id="CAB14300">
    <property type="protein sequence ID" value="CAB14300"/>
    <property type="gene ID" value="BSU_23680"/>
</dbReference>
<dbReference type="GeneID" id="938708"/>
<dbReference type="KEGG" id="bsu:BSU23680"/>
<dbReference type="PATRIC" id="fig|224308.179.peg.2581"/>
<dbReference type="eggNOG" id="COG2329">
    <property type="taxonomic scope" value="Bacteria"/>
</dbReference>
<dbReference type="InParanoid" id="P54563"/>
<dbReference type="OrthoDB" id="9798439at2"/>
<dbReference type="PhylomeDB" id="P54563"/>
<dbReference type="BioCyc" id="BSUB:BSU23680-MONOMER"/>
<dbReference type="EvolutionaryTrace" id="P54563"/>
<dbReference type="Proteomes" id="UP000001570">
    <property type="component" value="Chromosome"/>
</dbReference>
<dbReference type="Gene3D" id="3.30.70.100">
    <property type="match status" value="1"/>
</dbReference>
<dbReference type="InterPro" id="IPR007138">
    <property type="entry name" value="ABM_dom"/>
</dbReference>
<dbReference type="InterPro" id="IPR011008">
    <property type="entry name" value="Dimeric_a/b-barrel"/>
</dbReference>
<dbReference type="InterPro" id="IPR052936">
    <property type="entry name" value="Jasmonate_Hydroxylase-like"/>
</dbReference>
<dbReference type="PANTHER" id="PTHR37811:SF2">
    <property type="entry name" value="ABM DOMAIN-CONTAINING PROTEIN"/>
    <property type="match status" value="1"/>
</dbReference>
<dbReference type="PANTHER" id="PTHR37811">
    <property type="entry name" value="BLL5343 PROTEIN"/>
    <property type="match status" value="1"/>
</dbReference>
<dbReference type="Pfam" id="PF03992">
    <property type="entry name" value="ABM"/>
    <property type="match status" value="1"/>
</dbReference>
<dbReference type="SUPFAM" id="SSF54909">
    <property type="entry name" value="Dimeric alpha+beta barrel"/>
    <property type="match status" value="1"/>
</dbReference>
<dbReference type="PROSITE" id="PS51725">
    <property type="entry name" value="ABM"/>
    <property type="match status" value="1"/>
</dbReference>
<protein>
    <recommendedName>
        <fullName>Uncharacterized protein YqjZ</fullName>
    </recommendedName>
</protein>
<proteinExistence type="evidence at protein level"/>
<gene>
    <name type="primary">yqjZ</name>
    <name type="ordered locus">BSU23680</name>
</gene>